<feature type="chain" id="PRO_1000119231" description="Deoxyuridine 5'-triphosphate nucleotidohydrolase">
    <location>
        <begin position="1"/>
        <end position="151"/>
    </location>
</feature>
<feature type="binding site" evidence="1">
    <location>
        <begin position="70"/>
        <end position="72"/>
    </location>
    <ligand>
        <name>substrate</name>
    </ligand>
</feature>
<feature type="binding site" evidence="1">
    <location>
        <position position="83"/>
    </location>
    <ligand>
        <name>substrate</name>
    </ligand>
</feature>
<feature type="binding site" evidence="1">
    <location>
        <begin position="87"/>
        <end position="89"/>
    </location>
    <ligand>
        <name>substrate</name>
    </ligand>
</feature>
<dbReference type="EC" id="3.6.1.23" evidence="1"/>
<dbReference type="EMBL" id="CP001336">
    <property type="protein sequence ID" value="ACL21683.1"/>
    <property type="molecule type" value="Genomic_DNA"/>
</dbReference>
<dbReference type="RefSeq" id="WP_005808844.1">
    <property type="nucleotide sequence ID" value="NC_011830.1"/>
</dbReference>
<dbReference type="SMR" id="B8FQZ6"/>
<dbReference type="KEGG" id="dhd:Dhaf_3666"/>
<dbReference type="HOGENOM" id="CLU_068508_1_1_9"/>
<dbReference type="UniPathway" id="UPA00610">
    <property type="reaction ID" value="UER00666"/>
</dbReference>
<dbReference type="Proteomes" id="UP000007726">
    <property type="component" value="Chromosome"/>
</dbReference>
<dbReference type="GO" id="GO:0004170">
    <property type="term" value="F:dUTP diphosphatase activity"/>
    <property type="evidence" value="ECO:0007669"/>
    <property type="project" value="UniProtKB-UniRule"/>
</dbReference>
<dbReference type="GO" id="GO:0000287">
    <property type="term" value="F:magnesium ion binding"/>
    <property type="evidence" value="ECO:0007669"/>
    <property type="project" value="UniProtKB-UniRule"/>
</dbReference>
<dbReference type="GO" id="GO:0006226">
    <property type="term" value="P:dUMP biosynthetic process"/>
    <property type="evidence" value="ECO:0007669"/>
    <property type="project" value="UniProtKB-UniRule"/>
</dbReference>
<dbReference type="GO" id="GO:0046081">
    <property type="term" value="P:dUTP catabolic process"/>
    <property type="evidence" value="ECO:0007669"/>
    <property type="project" value="InterPro"/>
</dbReference>
<dbReference type="CDD" id="cd07557">
    <property type="entry name" value="trimeric_dUTPase"/>
    <property type="match status" value="1"/>
</dbReference>
<dbReference type="FunFam" id="2.70.40.10:FF:000002">
    <property type="entry name" value="dUTP diphosphatase"/>
    <property type="match status" value="1"/>
</dbReference>
<dbReference type="Gene3D" id="2.70.40.10">
    <property type="match status" value="1"/>
</dbReference>
<dbReference type="HAMAP" id="MF_00116">
    <property type="entry name" value="dUTPase_bact"/>
    <property type="match status" value="1"/>
</dbReference>
<dbReference type="InterPro" id="IPR008181">
    <property type="entry name" value="dUTPase"/>
</dbReference>
<dbReference type="InterPro" id="IPR029054">
    <property type="entry name" value="dUTPase-like"/>
</dbReference>
<dbReference type="InterPro" id="IPR036157">
    <property type="entry name" value="dUTPase-like_sf"/>
</dbReference>
<dbReference type="InterPro" id="IPR033704">
    <property type="entry name" value="dUTPase_trimeric"/>
</dbReference>
<dbReference type="NCBIfam" id="TIGR00576">
    <property type="entry name" value="dut"/>
    <property type="match status" value="1"/>
</dbReference>
<dbReference type="NCBIfam" id="NF001862">
    <property type="entry name" value="PRK00601.1"/>
    <property type="match status" value="1"/>
</dbReference>
<dbReference type="PANTHER" id="PTHR11241">
    <property type="entry name" value="DEOXYURIDINE 5'-TRIPHOSPHATE NUCLEOTIDOHYDROLASE"/>
    <property type="match status" value="1"/>
</dbReference>
<dbReference type="PANTHER" id="PTHR11241:SF0">
    <property type="entry name" value="DEOXYURIDINE 5'-TRIPHOSPHATE NUCLEOTIDOHYDROLASE"/>
    <property type="match status" value="1"/>
</dbReference>
<dbReference type="Pfam" id="PF00692">
    <property type="entry name" value="dUTPase"/>
    <property type="match status" value="1"/>
</dbReference>
<dbReference type="SUPFAM" id="SSF51283">
    <property type="entry name" value="dUTPase-like"/>
    <property type="match status" value="1"/>
</dbReference>
<comment type="function">
    <text evidence="1">This enzyme is involved in nucleotide metabolism: it produces dUMP, the immediate precursor of thymidine nucleotides and it decreases the intracellular concentration of dUTP so that uracil cannot be incorporated into DNA.</text>
</comment>
<comment type="catalytic activity">
    <reaction evidence="1">
        <text>dUTP + H2O = dUMP + diphosphate + H(+)</text>
        <dbReference type="Rhea" id="RHEA:10248"/>
        <dbReference type="ChEBI" id="CHEBI:15377"/>
        <dbReference type="ChEBI" id="CHEBI:15378"/>
        <dbReference type="ChEBI" id="CHEBI:33019"/>
        <dbReference type="ChEBI" id="CHEBI:61555"/>
        <dbReference type="ChEBI" id="CHEBI:246422"/>
        <dbReference type="EC" id="3.6.1.23"/>
    </reaction>
</comment>
<comment type="cofactor">
    <cofactor evidence="1">
        <name>Mg(2+)</name>
        <dbReference type="ChEBI" id="CHEBI:18420"/>
    </cofactor>
</comment>
<comment type="pathway">
    <text evidence="1">Pyrimidine metabolism; dUMP biosynthesis; dUMP from dCTP (dUTP route): step 2/2.</text>
</comment>
<comment type="similarity">
    <text evidence="1">Belongs to the dUTPase family.</text>
</comment>
<name>DUT_DESHD</name>
<proteinExistence type="inferred from homology"/>
<reference key="1">
    <citation type="journal article" date="2012" name="BMC Microbiol.">
        <title>Genome sequence of Desulfitobacterium hafniense DCB-2, a Gram-positive anaerobe capable of dehalogenation and metal reduction.</title>
        <authorList>
            <person name="Kim S.H."/>
            <person name="Harzman C."/>
            <person name="Davis J.K."/>
            <person name="Hutcheson R."/>
            <person name="Broderick J.B."/>
            <person name="Marsh T.L."/>
            <person name="Tiedje J.M."/>
        </authorList>
    </citation>
    <scope>NUCLEOTIDE SEQUENCE [LARGE SCALE GENOMIC DNA]</scope>
    <source>
        <strain>DSM 10664 / DCB-2</strain>
    </source>
</reference>
<sequence>MNSIKVKIAYVRKDKAPKLPQYATPGAAGVDLQASLDQELTIEPGQIVKIPTGLAIELPHAGVGAFVFARSGLASKYGLALANGVGVIDSDYRGEILVAVINQGSEPFVVKDGDRIAQMVFLPVFIGEFYLADQLDETGRGCGGFGSTGVS</sequence>
<accession>B8FQZ6</accession>
<evidence type="ECO:0000255" key="1">
    <source>
        <dbReference type="HAMAP-Rule" id="MF_00116"/>
    </source>
</evidence>
<keyword id="KW-0378">Hydrolase</keyword>
<keyword id="KW-0460">Magnesium</keyword>
<keyword id="KW-0479">Metal-binding</keyword>
<keyword id="KW-0546">Nucleotide metabolism</keyword>
<protein>
    <recommendedName>
        <fullName evidence="1">Deoxyuridine 5'-triphosphate nucleotidohydrolase</fullName>
        <shortName evidence="1">dUTPase</shortName>
        <ecNumber evidence="1">3.6.1.23</ecNumber>
    </recommendedName>
    <alternativeName>
        <fullName evidence="1">dUTP pyrophosphatase</fullName>
    </alternativeName>
</protein>
<organism>
    <name type="scientific">Desulfitobacterium hafniense (strain DSM 10664 / DCB-2)</name>
    <dbReference type="NCBI Taxonomy" id="272564"/>
    <lineage>
        <taxon>Bacteria</taxon>
        <taxon>Bacillati</taxon>
        <taxon>Bacillota</taxon>
        <taxon>Clostridia</taxon>
        <taxon>Eubacteriales</taxon>
        <taxon>Desulfitobacteriaceae</taxon>
        <taxon>Desulfitobacterium</taxon>
    </lineage>
</organism>
<gene>
    <name evidence="1" type="primary">dut</name>
    <name type="ordered locus">Dhaf_3666</name>
</gene>